<name>NRN1_DANRE</name>
<accession>Q6DGP8</accession>
<feature type="signal peptide" evidence="2">
    <location>
        <begin position="1"/>
        <end position="27"/>
    </location>
</feature>
<feature type="chain" id="PRO_0000262518" description="Neuritin">
    <location>
        <begin position="28"/>
        <end position="112"/>
    </location>
</feature>
<feature type="propeptide" id="PRO_0000262519" description="Removed in mature form" evidence="2">
    <location>
        <begin position="113"/>
        <end position="142"/>
    </location>
</feature>
<feature type="lipid moiety-binding region" description="GPI-anchor amidated alanine" evidence="2">
    <location>
        <position position="112"/>
    </location>
</feature>
<organism>
    <name type="scientific">Danio rerio</name>
    <name type="common">Zebrafish</name>
    <name type="synonym">Brachydanio rerio</name>
    <dbReference type="NCBI Taxonomy" id="7955"/>
    <lineage>
        <taxon>Eukaryota</taxon>
        <taxon>Metazoa</taxon>
        <taxon>Chordata</taxon>
        <taxon>Craniata</taxon>
        <taxon>Vertebrata</taxon>
        <taxon>Euteleostomi</taxon>
        <taxon>Actinopterygii</taxon>
        <taxon>Neopterygii</taxon>
        <taxon>Teleostei</taxon>
        <taxon>Ostariophysi</taxon>
        <taxon>Cypriniformes</taxon>
        <taxon>Danionidae</taxon>
        <taxon>Danioninae</taxon>
        <taxon>Danio</taxon>
    </lineage>
</organism>
<proteinExistence type="evidence at transcript level"/>
<reference key="1">
    <citation type="submission" date="2004-07" db="EMBL/GenBank/DDBJ databases">
        <authorList>
            <consortium name="NIH - Zebrafish Gene Collection (ZGC) project"/>
        </authorList>
    </citation>
    <scope>NUCLEOTIDE SEQUENCE [LARGE SCALE MRNA]</scope>
    <source>
        <tissue>Brain</tissue>
    </source>
</reference>
<sequence>MGLTLSGRYISLFLAVQIAYLLQAVRAAGKCGTVFKGFSDCLLQLGENMANYPQELDEKENLQTICTYWDDFHSCATTALADCQEGATDLWEKLKKESRNLDFRGSLFELCAGGNGAIRSSVPFGVTLLITALSALVTWMQF</sequence>
<gene>
    <name type="primary">nrn1</name>
    <name type="ORF">zgc:92828</name>
</gene>
<keyword id="KW-1003">Cell membrane</keyword>
<keyword id="KW-0325">Glycoprotein</keyword>
<keyword id="KW-0336">GPI-anchor</keyword>
<keyword id="KW-0449">Lipoprotein</keyword>
<keyword id="KW-0472">Membrane</keyword>
<keyword id="KW-1185">Reference proteome</keyword>
<keyword id="KW-0732">Signal</keyword>
<keyword id="KW-0770">Synapse</keyword>
<evidence type="ECO:0000250" key="1"/>
<evidence type="ECO:0000255" key="2"/>
<evidence type="ECO:0000305" key="3"/>
<dbReference type="EMBL" id="BC076292">
    <property type="protein sequence ID" value="AAH76292.1"/>
    <property type="molecule type" value="mRNA"/>
</dbReference>
<dbReference type="RefSeq" id="NP_001002507.1">
    <property type="nucleotide sequence ID" value="NM_001002507.2"/>
</dbReference>
<dbReference type="FunCoup" id="Q6DGP8">
    <property type="interactions" value="1203"/>
</dbReference>
<dbReference type="STRING" id="7955.ENSDARP00000097397"/>
<dbReference type="PaxDb" id="7955-ENSDARP00000097397"/>
<dbReference type="GeneID" id="436780"/>
<dbReference type="KEGG" id="dre:436780"/>
<dbReference type="AGR" id="ZFIN:ZDB-GENE-040718-212"/>
<dbReference type="CTD" id="436780"/>
<dbReference type="ZFIN" id="ZDB-GENE-040718-212">
    <property type="gene designation" value="nrn1a"/>
</dbReference>
<dbReference type="eggNOG" id="ENOG502RZNR">
    <property type="taxonomic scope" value="Eukaryota"/>
</dbReference>
<dbReference type="InParanoid" id="Q6DGP8"/>
<dbReference type="OrthoDB" id="9928047at2759"/>
<dbReference type="PhylomeDB" id="Q6DGP8"/>
<dbReference type="PRO" id="PR:Q6DGP8"/>
<dbReference type="Proteomes" id="UP000000437">
    <property type="component" value="Chromosome 24"/>
</dbReference>
<dbReference type="GO" id="GO:0005886">
    <property type="term" value="C:plasma membrane"/>
    <property type="evidence" value="ECO:0000318"/>
    <property type="project" value="GO_Central"/>
</dbReference>
<dbReference type="GO" id="GO:0098552">
    <property type="term" value="C:side of membrane"/>
    <property type="evidence" value="ECO:0007669"/>
    <property type="project" value="UniProtKB-KW"/>
</dbReference>
<dbReference type="GO" id="GO:0045202">
    <property type="term" value="C:synapse"/>
    <property type="evidence" value="ECO:0007669"/>
    <property type="project" value="UniProtKB-SubCell"/>
</dbReference>
<dbReference type="GO" id="GO:1990138">
    <property type="term" value="P:neuron projection extension"/>
    <property type="evidence" value="ECO:0000318"/>
    <property type="project" value="GO_Central"/>
</dbReference>
<dbReference type="InterPro" id="IPR026144">
    <property type="entry name" value="Neuritin_fam"/>
</dbReference>
<dbReference type="PANTHER" id="PTHR15902:SF1">
    <property type="entry name" value="NEURITIN"/>
    <property type="match status" value="1"/>
</dbReference>
<dbReference type="PANTHER" id="PTHR15902">
    <property type="entry name" value="NEURITIN-RELATED"/>
    <property type="match status" value="1"/>
</dbReference>
<dbReference type="Pfam" id="PF15056">
    <property type="entry name" value="NRN1"/>
    <property type="match status" value="1"/>
</dbReference>
<comment type="function">
    <text evidence="1">Modulates postsynaptic dendritic arbor elaboration and synaptic maturation.</text>
</comment>
<comment type="subcellular location">
    <subcellularLocation>
        <location evidence="3">Cell membrane</location>
        <topology evidence="3">Lipid-anchor</topology>
        <topology evidence="3">GPI-anchor</topology>
    </subcellularLocation>
    <subcellularLocation>
        <location evidence="1">Synapse</location>
    </subcellularLocation>
</comment>
<comment type="similarity">
    <text evidence="3">Belongs to the neuritin family.</text>
</comment>
<protein>
    <recommendedName>
        <fullName>Neuritin</fullName>
    </recommendedName>
</protein>